<organism>
    <name type="scientific">Escherichia coli (strain UTI89 / UPEC)</name>
    <dbReference type="NCBI Taxonomy" id="364106"/>
    <lineage>
        <taxon>Bacteria</taxon>
        <taxon>Pseudomonadati</taxon>
        <taxon>Pseudomonadota</taxon>
        <taxon>Gammaproteobacteria</taxon>
        <taxon>Enterobacterales</taxon>
        <taxon>Enterobacteriaceae</taxon>
        <taxon>Escherichia</taxon>
    </lineage>
</organism>
<sequence>MPVITLPDGSQRHYDHAVSPMDVALDIGPGLAKACIAGRVNGELVDACDLIENDAQLSIITAKDEEGLEIIRHSCAHLLGHAIKQLWPHTKMAIGPVIDNGFYYDVDLDRTLTQEDVEALEKRMHELAEKNYDVIKKKVSWHEARETFANRGESYKVSILDENIAHDDKPGLYFHEEYVDMCRGPHVPNMRFCHHFKLMKTAGAYWRGDSNNKMLQRIYGTAWADKKALNAYLQRLEEAAKRDHRKIGKQLDLYHMQEEAPGMVFWHNDGWTIFRELEVFVRSKLKEYQYQEVKGPFMMDRVLWEKTGHWDNYKDAMFTTSSENREYCIKPMNCPGHVQIFNQGLKSYRDLPLRMAEFGSCHRNEPSGSLHGLMRVRGFTQDDAHIFCTEEQIRDEVNGCIRLVYDMYSTFGFEKIVVKLSTRPEKRIGSDEMWDRAEADLAVALEENNIPFEYQLGEGAFYGPKIEFTLYDCLDRAWQCGTVQLDFSLPSRLSASYVGEDNERKVPVMIHRAILGSMERFIGILTEEFAGFFPTWLAPVQVVIMNITDSQSEYVNELTQKLSNAGIRVKADLRNEKIGFKIREHTLRRVPYMLVCGDKEVESGKVAVRTRRGKDLGSMDVNEVIEKLQQEIRSRSLKQLEE</sequence>
<dbReference type="EC" id="6.1.1.3" evidence="1"/>
<dbReference type="EMBL" id="CP000243">
    <property type="protein sequence ID" value="ABE07388.1"/>
    <property type="molecule type" value="Genomic_DNA"/>
</dbReference>
<dbReference type="RefSeq" id="WP_001144202.1">
    <property type="nucleotide sequence ID" value="NZ_CP064825.1"/>
</dbReference>
<dbReference type="SMR" id="Q1RB76"/>
<dbReference type="GeneID" id="93775932"/>
<dbReference type="KEGG" id="eci:UTI89_C1912"/>
<dbReference type="HOGENOM" id="CLU_008554_0_1_6"/>
<dbReference type="Proteomes" id="UP000001952">
    <property type="component" value="Chromosome"/>
</dbReference>
<dbReference type="GO" id="GO:0005829">
    <property type="term" value="C:cytosol"/>
    <property type="evidence" value="ECO:0007669"/>
    <property type="project" value="TreeGrafter"/>
</dbReference>
<dbReference type="GO" id="GO:0005524">
    <property type="term" value="F:ATP binding"/>
    <property type="evidence" value="ECO:0007669"/>
    <property type="project" value="UniProtKB-UniRule"/>
</dbReference>
<dbReference type="GO" id="GO:0046872">
    <property type="term" value="F:metal ion binding"/>
    <property type="evidence" value="ECO:0007669"/>
    <property type="project" value="UniProtKB-KW"/>
</dbReference>
<dbReference type="GO" id="GO:0004829">
    <property type="term" value="F:threonine-tRNA ligase activity"/>
    <property type="evidence" value="ECO:0007669"/>
    <property type="project" value="UniProtKB-UniRule"/>
</dbReference>
<dbReference type="GO" id="GO:0000049">
    <property type="term" value="F:tRNA binding"/>
    <property type="evidence" value="ECO:0007669"/>
    <property type="project" value="UniProtKB-KW"/>
</dbReference>
<dbReference type="GO" id="GO:0006435">
    <property type="term" value="P:threonyl-tRNA aminoacylation"/>
    <property type="evidence" value="ECO:0007669"/>
    <property type="project" value="UniProtKB-UniRule"/>
</dbReference>
<dbReference type="CDD" id="cd01667">
    <property type="entry name" value="TGS_ThrRS"/>
    <property type="match status" value="1"/>
</dbReference>
<dbReference type="CDD" id="cd00860">
    <property type="entry name" value="ThrRS_anticodon"/>
    <property type="match status" value="1"/>
</dbReference>
<dbReference type="CDD" id="cd00771">
    <property type="entry name" value="ThrRS_core"/>
    <property type="match status" value="1"/>
</dbReference>
<dbReference type="FunFam" id="3.10.20.30:FF:000005">
    <property type="entry name" value="Threonine--tRNA ligase"/>
    <property type="match status" value="1"/>
</dbReference>
<dbReference type="FunFam" id="3.30.54.20:FF:000002">
    <property type="entry name" value="Threonine--tRNA ligase"/>
    <property type="match status" value="1"/>
</dbReference>
<dbReference type="FunFam" id="3.30.930.10:FF:000002">
    <property type="entry name" value="Threonine--tRNA ligase"/>
    <property type="match status" value="1"/>
</dbReference>
<dbReference type="FunFam" id="3.40.50.800:FF:000001">
    <property type="entry name" value="Threonine--tRNA ligase"/>
    <property type="match status" value="1"/>
</dbReference>
<dbReference type="FunFam" id="3.30.980.10:FF:000005">
    <property type="entry name" value="Threonyl-tRNA synthetase, mitochondrial"/>
    <property type="match status" value="1"/>
</dbReference>
<dbReference type="Gene3D" id="3.10.20.30">
    <property type="match status" value="1"/>
</dbReference>
<dbReference type="Gene3D" id="3.30.54.20">
    <property type="match status" value="1"/>
</dbReference>
<dbReference type="Gene3D" id="3.40.50.800">
    <property type="entry name" value="Anticodon-binding domain"/>
    <property type="match status" value="1"/>
</dbReference>
<dbReference type="Gene3D" id="3.30.930.10">
    <property type="entry name" value="Bira Bifunctional Protein, Domain 2"/>
    <property type="match status" value="1"/>
</dbReference>
<dbReference type="Gene3D" id="3.30.980.10">
    <property type="entry name" value="Threonyl-trna Synthetase, Chain A, domain 2"/>
    <property type="match status" value="1"/>
</dbReference>
<dbReference type="HAMAP" id="MF_00184">
    <property type="entry name" value="Thr_tRNA_synth"/>
    <property type="match status" value="1"/>
</dbReference>
<dbReference type="InterPro" id="IPR002314">
    <property type="entry name" value="aa-tRNA-synt_IIb"/>
</dbReference>
<dbReference type="InterPro" id="IPR006195">
    <property type="entry name" value="aa-tRNA-synth_II"/>
</dbReference>
<dbReference type="InterPro" id="IPR045864">
    <property type="entry name" value="aa-tRNA-synth_II/BPL/LPL"/>
</dbReference>
<dbReference type="InterPro" id="IPR004154">
    <property type="entry name" value="Anticodon-bd"/>
</dbReference>
<dbReference type="InterPro" id="IPR036621">
    <property type="entry name" value="Anticodon-bd_dom_sf"/>
</dbReference>
<dbReference type="InterPro" id="IPR012675">
    <property type="entry name" value="Beta-grasp_dom_sf"/>
</dbReference>
<dbReference type="InterPro" id="IPR004095">
    <property type="entry name" value="TGS"/>
</dbReference>
<dbReference type="InterPro" id="IPR012676">
    <property type="entry name" value="TGS-like"/>
</dbReference>
<dbReference type="InterPro" id="IPR002320">
    <property type="entry name" value="Thr-tRNA-ligase_IIa"/>
</dbReference>
<dbReference type="InterPro" id="IPR018163">
    <property type="entry name" value="Thr/Ala-tRNA-synth_IIc_edit"/>
</dbReference>
<dbReference type="InterPro" id="IPR047246">
    <property type="entry name" value="ThrRS_anticodon"/>
</dbReference>
<dbReference type="InterPro" id="IPR033728">
    <property type="entry name" value="ThrRS_core"/>
</dbReference>
<dbReference type="InterPro" id="IPR012947">
    <property type="entry name" value="tRNA_SAD"/>
</dbReference>
<dbReference type="NCBIfam" id="TIGR00418">
    <property type="entry name" value="thrS"/>
    <property type="match status" value="1"/>
</dbReference>
<dbReference type="PANTHER" id="PTHR11451:SF44">
    <property type="entry name" value="THREONINE--TRNA LIGASE, CHLOROPLASTIC_MITOCHONDRIAL 2"/>
    <property type="match status" value="1"/>
</dbReference>
<dbReference type="PANTHER" id="PTHR11451">
    <property type="entry name" value="THREONINE-TRNA LIGASE"/>
    <property type="match status" value="1"/>
</dbReference>
<dbReference type="Pfam" id="PF03129">
    <property type="entry name" value="HGTP_anticodon"/>
    <property type="match status" value="1"/>
</dbReference>
<dbReference type="Pfam" id="PF02824">
    <property type="entry name" value="TGS"/>
    <property type="match status" value="1"/>
</dbReference>
<dbReference type="Pfam" id="PF00587">
    <property type="entry name" value="tRNA-synt_2b"/>
    <property type="match status" value="1"/>
</dbReference>
<dbReference type="Pfam" id="PF07973">
    <property type="entry name" value="tRNA_SAD"/>
    <property type="match status" value="1"/>
</dbReference>
<dbReference type="PRINTS" id="PR01047">
    <property type="entry name" value="TRNASYNTHTHR"/>
</dbReference>
<dbReference type="SMART" id="SM00863">
    <property type="entry name" value="tRNA_SAD"/>
    <property type="match status" value="1"/>
</dbReference>
<dbReference type="SUPFAM" id="SSF52954">
    <property type="entry name" value="Class II aaRS ABD-related"/>
    <property type="match status" value="1"/>
</dbReference>
<dbReference type="SUPFAM" id="SSF55681">
    <property type="entry name" value="Class II aaRS and biotin synthetases"/>
    <property type="match status" value="1"/>
</dbReference>
<dbReference type="SUPFAM" id="SSF81271">
    <property type="entry name" value="TGS-like"/>
    <property type="match status" value="1"/>
</dbReference>
<dbReference type="SUPFAM" id="SSF55186">
    <property type="entry name" value="ThrRS/AlaRS common domain"/>
    <property type="match status" value="1"/>
</dbReference>
<dbReference type="PROSITE" id="PS50862">
    <property type="entry name" value="AA_TRNA_LIGASE_II"/>
    <property type="match status" value="1"/>
</dbReference>
<dbReference type="PROSITE" id="PS51880">
    <property type="entry name" value="TGS"/>
    <property type="match status" value="1"/>
</dbReference>
<comment type="function">
    <text evidence="1">Catalyzes the attachment of threonine to tRNA(Thr) in a two-step reaction: L-threonine is first activated by ATP to form Thr-AMP and then transferred to the acceptor end of tRNA(Thr). Also edits incorrectly charged L-seryl-tRNA(Thr).</text>
</comment>
<comment type="catalytic activity">
    <reaction evidence="1">
        <text>tRNA(Thr) + L-threonine + ATP = L-threonyl-tRNA(Thr) + AMP + diphosphate + H(+)</text>
        <dbReference type="Rhea" id="RHEA:24624"/>
        <dbReference type="Rhea" id="RHEA-COMP:9670"/>
        <dbReference type="Rhea" id="RHEA-COMP:9704"/>
        <dbReference type="ChEBI" id="CHEBI:15378"/>
        <dbReference type="ChEBI" id="CHEBI:30616"/>
        <dbReference type="ChEBI" id="CHEBI:33019"/>
        <dbReference type="ChEBI" id="CHEBI:57926"/>
        <dbReference type="ChEBI" id="CHEBI:78442"/>
        <dbReference type="ChEBI" id="CHEBI:78534"/>
        <dbReference type="ChEBI" id="CHEBI:456215"/>
        <dbReference type="EC" id="6.1.1.3"/>
    </reaction>
</comment>
<comment type="cofactor">
    <cofactor evidence="1">
        <name>Zn(2+)</name>
        <dbReference type="ChEBI" id="CHEBI:29105"/>
    </cofactor>
    <text evidence="1">Binds 1 zinc ion per subunit.</text>
</comment>
<comment type="subunit">
    <text evidence="1">Homodimer.</text>
</comment>
<comment type="subcellular location">
    <subcellularLocation>
        <location evidence="1">Cytoplasm</location>
    </subcellularLocation>
</comment>
<comment type="similarity">
    <text evidence="1">Belongs to the class-II aminoacyl-tRNA synthetase family.</text>
</comment>
<reference key="1">
    <citation type="journal article" date="2006" name="Proc. Natl. Acad. Sci. U.S.A.">
        <title>Identification of genes subject to positive selection in uropathogenic strains of Escherichia coli: a comparative genomics approach.</title>
        <authorList>
            <person name="Chen S.L."/>
            <person name="Hung C.-S."/>
            <person name="Xu J."/>
            <person name="Reigstad C.S."/>
            <person name="Magrini V."/>
            <person name="Sabo A."/>
            <person name="Blasiar D."/>
            <person name="Bieri T."/>
            <person name="Meyer R.R."/>
            <person name="Ozersky P."/>
            <person name="Armstrong J.R."/>
            <person name="Fulton R.S."/>
            <person name="Latreille J.P."/>
            <person name="Spieth J."/>
            <person name="Hooton T.M."/>
            <person name="Mardis E.R."/>
            <person name="Hultgren S.J."/>
            <person name="Gordon J.I."/>
        </authorList>
    </citation>
    <scope>NUCLEOTIDE SEQUENCE [LARGE SCALE GENOMIC DNA]</scope>
    <source>
        <strain>UTI89 / UPEC</strain>
    </source>
</reference>
<evidence type="ECO:0000255" key="1">
    <source>
        <dbReference type="HAMAP-Rule" id="MF_00184"/>
    </source>
</evidence>
<evidence type="ECO:0000255" key="2">
    <source>
        <dbReference type="PROSITE-ProRule" id="PRU01228"/>
    </source>
</evidence>
<proteinExistence type="inferred from homology"/>
<keyword id="KW-0007">Acetylation</keyword>
<keyword id="KW-0030">Aminoacyl-tRNA synthetase</keyword>
<keyword id="KW-0067">ATP-binding</keyword>
<keyword id="KW-0963">Cytoplasm</keyword>
<keyword id="KW-0436">Ligase</keyword>
<keyword id="KW-0479">Metal-binding</keyword>
<keyword id="KW-0547">Nucleotide-binding</keyword>
<keyword id="KW-0648">Protein biosynthesis</keyword>
<keyword id="KW-0694">RNA-binding</keyword>
<keyword id="KW-0820">tRNA-binding</keyword>
<keyword id="KW-0862">Zinc</keyword>
<name>SYT_ECOUT</name>
<accession>Q1RB76</accession>
<feature type="chain" id="PRO_1000020385" description="Threonine--tRNA ligase">
    <location>
        <begin position="1"/>
        <end position="642"/>
    </location>
</feature>
<feature type="domain" description="TGS" evidence="2">
    <location>
        <begin position="1"/>
        <end position="61"/>
    </location>
</feature>
<feature type="region of interest" description="Catalytic" evidence="1">
    <location>
        <begin position="243"/>
        <end position="534"/>
    </location>
</feature>
<feature type="binding site" evidence="1">
    <location>
        <position position="334"/>
    </location>
    <ligand>
        <name>Zn(2+)</name>
        <dbReference type="ChEBI" id="CHEBI:29105"/>
    </ligand>
</feature>
<feature type="binding site" evidence="1">
    <location>
        <position position="385"/>
    </location>
    <ligand>
        <name>Zn(2+)</name>
        <dbReference type="ChEBI" id="CHEBI:29105"/>
    </ligand>
</feature>
<feature type="binding site" evidence="1">
    <location>
        <position position="511"/>
    </location>
    <ligand>
        <name>Zn(2+)</name>
        <dbReference type="ChEBI" id="CHEBI:29105"/>
    </ligand>
</feature>
<feature type="modified residue" description="N6-acetyllysine" evidence="1">
    <location>
        <position position="286"/>
    </location>
</feature>
<gene>
    <name evidence="1" type="primary">thrS</name>
    <name type="ordered locus">UTI89_C1912</name>
</gene>
<protein>
    <recommendedName>
        <fullName evidence="1">Threonine--tRNA ligase</fullName>
        <ecNumber evidence="1">6.1.1.3</ecNumber>
    </recommendedName>
    <alternativeName>
        <fullName evidence="1">Threonyl-tRNA synthetase</fullName>
        <shortName evidence="1">ThrRS</shortName>
    </alternativeName>
</protein>